<proteinExistence type="evidence at protein level"/>
<name>LOH2_ARATH</name>
<evidence type="ECO:0000250" key="1">
    <source>
        <dbReference type="UniProtKB" id="Q8C172"/>
    </source>
</evidence>
<evidence type="ECO:0000250" key="2">
    <source>
        <dbReference type="UniProtKB" id="Q9M6A3"/>
    </source>
</evidence>
<evidence type="ECO:0000255" key="3"/>
<evidence type="ECO:0000255" key="4">
    <source>
        <dbReference type="PROSITE-ProRule" id="PRU00205"/>
    </source>
</evidence>
<evidence type="ECO:0000269" key="5">
    <source>
    </source>
</evidence>
<evidence type="ECO:0000269" key="6">
    <source>
    </source>
</evidence>
<evidence type="ECO:0000269" key="7">
    <source>
    </source>
</evidence>
<evidence type="ECO:0000269" key="8">
    <source>
    </source>
</evidence>
<evidence type="ECO:0000269" key="9">
    <source>
    </source>
</evidence>
<evidence type="ECO:0000269" key="10">
    <source>
    </source>
</evidence>
<evidence type="ECO:0000269" key="11">
    <source>
    </source>
</evidence>
<evidence type="ECO:0000269" key="12">
    <source>
    </source>
</evidence>
<evidence type="ECO:0000303" key="13">
    <source>
    </source>
</evidence>
<evidence type="ECO:0000303" key="14">
    <source>
    </source>
</evidence>
<evidence type="ECO:0000303" key="15">
    <source>
    </source>
</evidence>
<evidence type="ECO:0000303" key="16">
    <source>
    </source>
</evidence>
<evidence type="ECO:0000303" key="17">
    <source>
    </source>
</evidence>
<evidence type="ECO:0000303" key="18">
    <source>
    </source>
</evidence>
<evidence type="ECO:0000303" key="19">
    <source>
    </source>
</evidence>
<evidence type="ECO:0000305" key="20"/>
<evidence type="ECO:0000312" key="21">
    <source>
        <dbReference type="Araport" id="AT3G19260"/>
    </source>
</evidence>
<evidence type="ECO:0000312" key="22">
    <source>
        <dbReference type="EMBL" id="AAF66103.1"/>
    </source>
</evidence>
<evidence type="ECO:0000312" key="23">
    <source>
        <dbReference type="EMBL" id="BAB02967.1"/>
    </source>
</evidence>
<evidence type="ECO:0007744" key="24">
    <source>
    </source>
</evidence>
<evidence type="ECO:0007744" key="25">
    <source>
    </source>
</evidence>
<sequence>MESVSSRGGDPVVKPSMEVWHFQIAVYFAFGFFFLRLVLDRYVFQRIALWLLSTGSAPIKLNDAATRAKIVKCKESLWKLLYYAACDFFVLQVIYHEPWARDIKLYFHGWPNQELKLSIKLYYMCQCGFYVYGVAALLAWETRRKDFAVMMSHHVITIILLSYSYLTSFFRIGAIILALHDASDVFMETAKIFKYSEKEFGASVCFALFAVSWLLLRLIYFPFWIIRATSIELLDYLDMTSAEGTLMYYSFNTMLLMLLVFHIYWWYLICAMIVRLLKNRGKVGEDIRSDSEDDDD</sequence>
<feature type="chain" id="PRO_0000185519" description="Ceramide synthase LOH2">
    <location>
        <begin position="1"/>
        <end position="296"/>
    </location>
</feature>
<feature type="transmembrane region" description="Helical" evidence="3">
    <location>
        <begin position="19"/>
        <end position="39"/>
    </location>
</feature>
<feature type="transmembrane region" description="Helical" evidence="3">
    <location>
        <begin position="80"/>
        <end position="100"/>
    </location>
</feature>
<feature type="transmembrane region" description="Helical" evidence="3">
    <location>
        <begin position="121"/>
        <end position="141"/>
    </location>
</feature>
<feature type="transmembrane region" description="Helical" evidence="3">
    <location>
        <begin position="158"/>
        <end position="178"/>
    </location>
</feature>
<feature type="transmembrane region" description="Helical" evidence="3">
    <location>
        <begin position="206"/>
        <end position="226"/>
    </location>
</feature>
<feature type="transmembrane region" description="Helical" evidence="3">
    <location>
        <begin position="254"/>
        <end position="274"/>
    </location>
</feature>
<feature type="domain" description="TLC" evidence="4">
    <location>
        <begin position="71"/>
        <end position="278"/>
    </location>
</feature>
<feature type="modified residue" description="Phosphoserine" evidence="24 25">
    <location>
        <position position="289"/>
    </location>
</feature>
<feature type="modified residue" description="Phosphoserine" evidence="24 25">
    <location>
        <position position="291"/>
    </location>
</feature>
<feature type="sequence conflict" description="In Ref. 1; AAF66103." evidence="20" ref="1">
    <original>D</original>
    <variation>DY</variation>
    <location>
        <position position="290"/>
    </location>
</feature>
<accession>Q9LJK3</accession>
<accession>Q9M6A2</accession>
<comment type="function">
    <text evidence="2 6 7 10 11 12">Prevents cell division in root meristems and promotes salicylic acid (SA) production and hypersensitive response (HR) (PubMed:26276842). Catalyzes the biosynthesis of ceramide sphingolipids with C(16) fatty acids, structural membrane lipids involved in membrane trafficking (e.g. early endosomes) and cell polarity (e.g. polar auxin transport related proteins); accepts only C16:0 fatty acids, but with a wide range of d18 sphingoid bases, such as sphinganine (d18:0) and palmitoyl-CoA (PubMed:21666002, PubMed:21883234, PubMed:26276842, PubMed:26635357). Mediates resistance to sphinganine-analog mycotoxins (SAMs, e.g. fumonisin B(1)) by restoring the sphingolipid biosynthesis (PubMed:26276842). Could salvage the transport of GPI-anchored proteins from the endoplasmic reticulum to the Golgi apparatus in ceramides-depleted cells after SAM exposure (By similarity). Contributes to hypoxic conditions tolerance (e.g. submergences), especially in the dark, by promoting the formation of very-long-chain (VLC) ceramide species (22:1, 24:1 and 26:1) and of VLC unsaturated ceramides, which are modulating CTR1-mediated ethylene signaling leading to endoplasmic reticulum (ER)-to-nucleus translocation of EIN2 and EIN3 (PubMed:25822663).</text>
</comment>
<comment type="catalytic activity">
    <reaction evidence="6 7 12">
        <text>a sphingoid base + hexadecanoyl-CoA = an N-hexadecanoyl-sphingoid base + CoA + H(+)</text>
        <dbReference type="Rhea" id="RHEA:61472"/>
        <dbReference type="ChEBI" id="CHEBI:15378"/>
        <dbReference type="ChEBI" id="CHEBI:57287"/>
        <dbReference type="ChEBI" id="CHEBI:57379"/>
        <dbReference type="ChEBI" id="CHEBI:84410"/>
        <dbReference type="ChEBI" id="CHEBI:144703"/>
        <dbReference type="EC" id="2.3.1.291"/>
    </reaction>
    <physiologicalReaction direction="left-to-right" evidence="6 7 12">
        <dbReference type="Rhea" id="RHEA:61473"/>
    </physiologicalReaction>
</comment>
<comment type="catalytic activity">
    <reaction evidence="6 7 12">
        <text>sphinganine + hexadecanoyl-CoA = N-hexadecanoylsphinganine + CoA + H(+)</text>
        <dbReference type="Rhea" id="RHEA:36539"/>
        <dbReference type="ChEBI" id="CHEBI:15378"/>
        <dbReference type="ChEBI" id="CHEBI:57287"/>
        <dbReference type="ChEBI" id="CHEBI:57379"/>
        <dbReference type="ChEBI" id="CHEBI:57817"/>
        <dbReference type="ChEBI" id="CHEBI:67042"/>
    </reaction>
    <physiologicalReaction direction="left-to-right" evidence="6 7 12">
        <dbReference type="Rhea" id="RHEA:36540"/>
    </physiologicalReaction>
</comment>
<comment type="catalytic activity">
    <reaction evidence="6 7 12">
        <text>sphing-4-enine + hexadecanoyl-CoA = N-hexadecanoylsphing-4-enine + CoA + H(+)</text>
        <dbReference type="Rhea" id="RHEA:36687"/>
        <dbReference type="ChEBI" id="CHEBI:15378"/>
        <dbReference type="ChEBI" id="CHEBI:57287"/>
        <dbReference type="ChEBI" id="CHEBI:57379"/>
        <dbReference type="ChEBI" id="CHEBI:57756"/>
        <dbReference type="ChEBI" id="CHEBI:72959"/>
    </reaction>
    <physiologicalReaction direction="left-to-right" evidence="6 7 12">
        <dbReference type="Rhea" id="RHEA:36688"/>
    </physiologicalReaction>
</comment>
<comment type="catalytic activity">
    <reaction evidence="6 7 12">
        <text>sphinga-(4E,8E)-dienine + hexadecanoyl-CoA = N-hexadecanoylsphinga-(4E,8E)-dienine + CoA + H(+)</text>
        <dbReference type="Rhea" id="RHEA:65620"/>
        <dbReference type="ChEBI" id="CHEBI:15378"/>
        <dbReference type="ChEBI" id="CHEBI:57287"/>
        <dbReference type="ChEBI" id="CHEBI:57379"/>
        <dbReference type="ChEBI" id="CHEBI:72758"/>
        <dbReference type="ChEBI" id="CHEBI:157623"/>
    </reaction>
    <physiologicalReaction direction="left-to-right" evidence="6 7 12">
        <dbReference type="Rhea" id="RHEA:65621"/>
    </physiologicalReaction>
</comment>
<comment type="catalytic activity">
    <reaction evidence="6 7 12">
        <text>sphinga-(4E,8Z)-dienine + hexadecanoyl-CoA = N-hexadecanoylsphinga-(4E,8Z)-dienine + CoA + H(+)</text>
        <dbReference type="Rhea" id="RHEA:65624"/>
        <dbReference type="ChEBI" id="CHEBI:15378"/>
        <dbReference type="ChEBI" id="CHEBI:57287"/>
        <dbReference type="ChEBI" id="CHEBI:57379"/>
        <dbReference type="ChEBI" id="CHEBI:157606"/>
        <dbReference type="ChEBI" id="CHEBI:157624"/>
    </reaction>
    <physiologicalReaction direction="left-to-right" evidence="6 7 12">
        <dbReference type="Rhea" id="RHEA:65625"/>
    </physiologicalReaction>
</comment>
<comment type="activity regulation">
    <text evidence="11 12">Inhibited by the mycotoxin fumonisin B(1), a sphingosine analog mycotoxins produced by pathogenic fungi (PubMed:26276842, PubMed:26635357). Activated by divalent cation such as magnesium Mg(2+), zinc Zn(2+), manganese Mn(2+) and calcium Ca(2+) (PubMed:26635357).</text>
</comment>
<comment type="biophysicochemical properties">
    <kinetics>
        <KM evidence="12">4 uM for sphinganine (d18:0)</KM>
        <Vmax evidence="12">146.0 pmol/min/mg enzyme with sphinganine (d18:0) as substrate</Vmax>
    </kinetics>
</comment>
<comment type="pathway">
    <text evidence="6 7 12">Sphingolipid metabolism.</text>
</comment>
<comment type="subcellular location">
    <subcellularLocation>
        <location evidence="1">Endoplasmic reticulum membrane</location>
        <topology evidence="3">Multi-pass membrane protein</topology>
    </subcellularLocation>
</comment>
<comment type="tissue specificity">
    <text evidence="7 9">Expressed ubiquitously with highest levels in pollen.</text>
</comment>
<comment type="disruption phenotype">
    <text evidence="5 7 8 10">Elevated levels of free trihydroxy sphingoid bases as well as ceramide and glucosylceramide species with C(20) to C(28) fatty acid, but reduced levels of species with C(16) fatty acids (PubMed:21883234, PubMed:25822663). Better resistance to submergence under light conditions, but increased sensitivity to dark submergence associated with declined levels of unsaturated very-long-chain (VLC) ceramide species (22:1, 24:1 and 26:1) (PubMed:25822663). Increased susceptibility to AAL-toxin triggering programmed cell death (PCD) (PubMed:18725200, PubMed:23617414).</text>
</comment>
<dbReference type="EC" id="2.3.1.291" evidence="6 7 12"/>
<dbReference type="EMBL" id="AF198180">
    <property type="protein sequence ID" value="AAF66103.1"/>
    <property type="molecule type" value="mRNA"/>
</dbReference>
<dbReference type="EMBL" id="AP000419">
    <property type="protein sequence ID" value="BAB02967.1"/>
    <property type="molecule type" value="Genomic_DNA"/>
</dbReference>
<dbReference type="EMBL" id="CP002686">
    <property type="protein sequence ID" value="AEE76214.1"/>
    <property type="molecule type" value="Genomic_DNA"/>
</dbReference>
<dbReference type="EMBL" id="AK118029">
    <property type="protein sequence ID" value="BAC42661.1"/>
    <property type="molecule type" value="mRNA"/>
</dbReference>
<dbReference type="EMBL" id="BT008341">
    <property type="protein sequence ID" value="AAP37700.1"/>
    <property type="molecule type" value="mRNA"/>
</dbReference>
<dbReference type="EMBL" id="AY084980">
    <property type="protein sequence ID" value="AAM61539.1"/>
    <property type="molecule type" value="mRNA"/>
</dbReference>
<dbReference type="RefSeq" id="NP_188557.1">
    <property type="nucleotide sequence ID" value="NM_112813.2"/>
</dbReference>
<dbReference type="SMR" id="Q9LJK3"/>
<dbReference type="BioGRID" id="6793">
    <property type="interactions" value="19"/>
</dbReference>
<dbReference type="FunCoup" id="Q9LJK3">
    <property type="interactions" value="3971"/>
</dbReference>
<dbReference type="IntAct" id="Q9LJK3">
    <property type="interactions" value="19"/>
</dbReference>
<dbReference type="STRING" id="3702.Q9LJK3"/>
<dbReference type="iPTMnet" id="Q9LJK3"/>
<dbReference type="PaxDb" id="3702-AT3G19260.1"/>
<dbReference type="ProteomicsDB" id="250751"/>
<dbReference type="EnsemblPlants" id="AT3G19260.1">
    <property type="protein sequence ID" value="AT3G19260.1"/>
    <property type="gene ID" value="AT3G19260"/>
</dbReference>
<dbReference type="GeneID" id="821460"/>
<dbReference type="Gramene" id="AT3G19260.1">
    <property type="protein sequence ID" value="AT3G19260.1"/>
    <property type="gene ID" value="AT3G19260"/>
</dbReference>
<dbReference type="KEGG" id="ath:AT3G19260"/>
<dbReference type="Araport" id="AT3G19260"/>
<dbReference type="TAIR" id="AT3G19260">
    <property type="gene designation" value="LOH2"/>
</dbReference>
<dbReference type="eggNOG" id="KOG1607">
    <property type="taxonomic scope" value="Eukaryota"/>
</dbReference>
<dbReference type="HOGENOM" id="CLU_028277_5_0_1"/>
<dbReference type="InParanoid" id="Q9LJK3"/>
<dbReference type="OMA" id="IATWHFQ"/>
<dbReference type="PhylomeDB" id="Q9LJK3"/>
<dbReference type="BioCyc" id="MetaCyc:MONOMER-20772"/>
<dbReference type="BRENDA" id="2.3.1.24">
    <property type="organism ID" value="399"/>
</dbReference>
<dbReference type="PRO" id="PR:Q9LJK3"/>
<dbReference type="Proteomes" id="UP000006548">
    <property type="component" value="Chromosome 3"/>
</dbReference>
<dbReference type="ExpressionAtlas" id="Q9LJK3">
    <property type="expression patterns" value="baseline and differential"/>
</dbReference>
<dbReference type="GO" id="GO:0005783">
    <property type="term" value="C:endoplasmic reticulum"/>
    <property type="evidence" value="ECO:0000314"/>
    <property type="project" value="TAIR"/>
</dbReference>
<dbReference type="GO" id="GO:0005789">
    <property type="term" value="C:endoplasmic reticulum membrane"/>
    <property type="evidence" value="ECO:0007669"/>
    <property type="project" value="UniProtKB-SubCell"/>
</dbReference>
<dbReference type="GO" id="GO:0005794">
    <property type="term" value="C:Golgi apparatus"/>
    <property type="evidence" value="ECO:0000314"/>
    <property type="project" value="TAIR"/>
</dbReference>
<dbReference type="GO" id="GO:0005886">
    <property type="term" value="C:plasma membrane"/>
    <property type="evidence" value="ECO:0007005"/>
    <property type="project" value="TAIR"/>
</dbReference>
<dbReference type="GO" id="GO:0050291">
    <property type="term" value="F:sphingosine N-acyltransferase activity"/>
    <property type="evidence" value="ECO:0000315"/>
    <property type="project" value="TAIR"/>
</dbReference>
<dbReference type="GO" id="GO:0046513">
    <property type="term" value="P:ceramide biosynthetic process"/>
    <property type="evidence" value="ECO:0000314"/>
    <property type="project" value="UniProtKB"/>
</dbReference>
<dbReference type="GO" id="GO:0010256">
    <property type="term" value="P:endomembrane system organization"/>
    <property type="evidence" value="ECO:0000250"/>
    <property type="project" value="UniProtKB"/>
</dbReference>
<dbReference type="GO" id="GO:0042759">
    <property type="term" value="P:long-chain fatty acid biosynthetic process"/>
    <property type="evidence" value="ECO:0000315"/>
    <property type="project" value="TAIR"/>
</dbReference>
<dbReference type="GO" id="GO:0002238">
    <property type="term" value="P:response to molecule of fungal origin"/>
    <property type="evidence" value="ECO:0000315"/>
    <property type="project" value="TAIR"/>
</dbReference>
<dbReference type="GO" id="GO:0006665">
    <property type="term" value="P:sphingolipid metabolic process"/>
    <property type="evidence" value="ECO:0000314"/>
    <property type="project" value="UniProtKB"/>
</dbReference>
<dbReference type="InterPro" id="IPR016439">
    <property type="entry name" value="Lag1/Lac1-like"/>
</dbReference>
<dbReference type="InterPro" id="IPR006634">
    <property type="entry name" value="TLC-dom"/>
</dbReference>
<dbReference type="PANTHER" id="PTHR12560:SF0">
    <property type="entry name" value="LD18904P"/>
    <property type="match status" value="1"/>
</dbReference>
<dbReference type="PANTHER" id="PTHR12560">
    <property type="entry name" value="LONGEVITY ASSURANCE FACTOR 1 LAG1"/>
    <property type="match status" value="1"/>
</dbReference>
<dbReference type="Pfam" id="PF03798">
    <property type="entry name" value="TRAM_LAG1_CLN8"/>
    <property type="match status" value="1"/>
</dbReference>
<dbReference type="SMART" id="SM00724">
    <property type="entry name" value="TLC"/>
    <property type="match status" value="1"/>
</dbReference>
<dbReference type="PROSITE" id="PS50922">
    <property type="entry name" value="TLC"/>
    <property type="match status" value="1"/>
</dbReference>
<protein>
    <recommendedName>
        <fullName evidence="18">Ceramide synthase LOH2</fullName>
        <shortName evidence="17">CS2</shortName>
        <shortName evidence="16">CSI</shortName>
        <ecNumber evidence="6 7 12">2.3.1.291</ecNumber>
    </recommendedName>
    <alternativeName>
        <fullName evidence="19">Protein LONGEVITY ASSURANCE GENE ONE HOMOLOG 2</fullName>
        <shortName evidence="15">LAG One Homolog 2</shortName>
        <shortName evidence="13">LAG1 homolog 2</shortName>
        <shortName evidence="13">LAG1 longevity assurance homolog 2</shortName>
    </alternativeName>
</protein>
<organism>
    <name type="scientific">Arabidopsis thaliana</name>
    <name type="common">Mouse-ear cress</name>
    <dbReference type="NCBI Taxonomy" id="3702"/>
    <lineage>
        <taxon>Eukaryota</taxon>
        <taxon>Viridiplantae</taxon>
        <taxon>Streptophyta</taxon>
        <taxon>Embryophyta</taxon>
        <taxon>Tracheophyta</taxon>
        <taxon>Spermatophyta</taxon>
        <taxon>Magnoliopsida</taxon>
        <taxon>eudicotyledons</taxon>
        <taxon>Gunneridae</taxon>
        <taxon>Pentapetalae</taxon>
        <taxon>rosids</taxon>
        <taxon>malvids</taxon>
        <taxon>Brassicales</taxon>
        <taxon>Brassicaceae</taxon>
        <taxon>Camelineae</taxon>
        <taxon>Arabidopsis</taxon>
    </lineage>
</organism>
<reference key="1">
    <citation type="journal article" date="2000" name="Proc. Natl. Acad. Sci. U.S.A.">
        <title>A longevity assurance gene homolog of tomato mediates resistance to Alternaria alternata f. sp. lycopersici toxins and fumonisin B1.</title>
        <authorList>
            <person name="Brandwagt B.F."/>
            <person name="Mesbah L.A."/>
            <person name="Takken F.L.W."/>
            <person name="Laurent P.L."/>
            <person name="Kneppers T.J.A."/>
            <person name="Hille J."/>
            <person name="Nijkamp H.J.J."/>
        </authorList>
    </citation>
    <scope>NUCLEOTIDE SEQUENCE [MRNA]</scope>
    <source>
        <strain>cv. Columbia</strain>
    </source>
</reference>
<reference key="2">
    <citation type="journal article" date="2000" name="DNA Res.">
        <title>Structural analysis of Arabidopsis thaliana chromosome 3. II. Sequence features of the 4,251,695 bp regions covered by 90 P1, TAC and BAC clones.</title>
        <authorList>
            <person name="Kaneko T."/>
            <person name="Katoh T."/>
            <person name="Sato S."/>
            <person name="Nakamura Y."/>
            <person name="Asamizu E."/>
            <person name="Tabata S."/>
        </authorList>
    </citation>
    <scope>NUCLEOTIDE SEQUENCE [LARGE SCALE GENOMIC DNA]</scope>
    <source>
        <strain>cv. Columbia</strain>
    </source>
</reference>
<reference key="3">
    <citation type="journal article" date="2017" name="Plant J.">
        <title>Araport11: a complete reannotation of the Arabidopsis thaliana reference genome.</title>
        <authorList>
            <person name="Cheng C.Y."/>
            <person name="Krishnakumar V."/>
            <person name="Chan A.P."/>
            <person name="Thibaud-Nissen F."/>
            <person name="Schobel S."/>
            <person name="Town C.D."/>
        </authorList>
    </citation>
    <scope>GENOME REANNOTATION</scope>
    <source>
        <strain>cv. Columbia</strain>
    </source>
</reference>
<reference key="4">
    <citation type="journal article" date="2002" name="Science">
        <title>Functional annotation of a full-length Arabidopsis cDNA collection.</title>
        <authorList>
            <person name="Seki M."/>
            <person name="Narusaka M."/>
            <person name="Kamiya A."/>
            <person name="Ishida J."/>
            <person name="Satou M."/>
            <person name="Sakurai T."/>
            <person name="Nakajima M."/>
            <person name="Enju A."/>
            <person name="Akiyama K."/>
            <person name="Oono Y."/>
            <person name="Muramatsu M."/>
            <person name="Hayashizaki Y."/>
            <person name="Kawai J."/>
            <person name="Carninci P."/>
            <person name="Itoh M."/>
            <person name="Ishii Y."/>
            <person name="Arakawa T."/>
            <person name="Shibata K."/>
            <person name="Shinagawa A."/>
            <person name="Shinozaki K."/>
        </authorList>
    </citation>
    <scope>NUCLEOTIDE SEQUENCE [LARGE SCALE MRNA]</scope>
    <source>
        <strain>cv. Columbia</strain>
    </source>
</reference>
<reference key="5">
    <citation type="journal article" date="2003" name="Science">
        <title>Empirical analysis of transcriptional activity in the Arabidopsis genome.</title>
        <authorList>
            <person name="Yamada K."/>
            <person name="Lim J."/>
            <person name="Dale J.M."/>
            <person name="Chen H."/>
            <person name="Shinn P."/>
            <person name="Palm C.J."/>
            <person name="Southwick A.M."/>
            <person name="Wu H.C."/>
            <person name="Kim C.J."/>
            <person name="Nguyen M."/>
            <person name="Pham P.K."/>
            <person name="Cheuk R.F."/>
            <person name="Karlin-Newmann G."/>
            <person name="Liu S.X."/>
            <person name="Lam B."/>
            <person name="Sakano H."/>
            <person name="Wu T."/>
            <person name="Yu G."/>
            <person name="Miranda M."/>
            <person name="Quach H.L."/>
            <person name="Tripp M."/>
            <person name="Chang C.H."/>
            <person name="Lee J.M."/>
            <person name="Toriumi M.J."/>
            <person name="Chan M.M."/>
            <person name="Tang C.C."/>
            <person name="Onodera C.S."/>
            <person name="Deng J.M."/>
            <person name="Akiyama K."/>
            <person name="Ansari Y."/>
            <person name="Arakawa T."/>
            <person name="Banh J."/>
            <person name="Banno F."/>
            <person name="Bowser L."/>
            <person name="Brooks S.Y."/>
            <person name="Carninci P."/>
            <person name="Chao Q."/>
            <person name="Choy N."/>
            <person name="Enju A."/>
            <person name="Goldsmith A.D."/>
            <person name="Gurjal M."/>
            <person name="Hansen N.F."/>
            <person name="Hayashizaki Y."/>
            <person name="Johnson-Hopson C."/>
            <person name="Hsuan V.W."/>
            <person name="Iida K."/>
            <person name="Karnes M."/>
            <person name="Khan S."/>
            <person name="Koesema E."/>
            <person name="Ishida J."/>
            <person name="Jiang P.X."/>
            <person name="Jones T."/>
            <person name="Kawai J."/>
            <person name="Kamiya A."/>
            <person name="Meyers C."/>
            <person name="Nakajima M."/>
            <person name="Narusaka M."/>
            <person name="Seki M."/>
            <person name="Sakurai T."/>
            <person name="Satou M."/>
            <person name="Tamse R."/>
            <person name="Vaysberg M."/>
            <person name="Wallender E.K."/>
            <person name="Wong C."/>
            <person name="Yamamura Y."/>
            <person name="Yuan S."/>
            <person name="Shinozaki K."/>
            <person name="Davis R.W."/>
            <person name="Theologis A."/>
            <person name="Ecker J.R."/>
        </authorList>
    </citation>
    <scope>NUCLEOTIDE SEQUENCE [LARGE SCALE MRNA]</scope>
    <source>
        <strain>cv. Columbia</strain>
    </source>
</reference>
<reference key="6">
    <citation type="submission" date="2002-03" db="EMBL/GenBank/DDBJ databases">
        <title>Full-length cDNA from Arabidopsis thaliana.</title>
        <authorList>
            <person name="Brover V.V."/>
            <person name="Troukhan M.E."/>
            <person name="Alexandrov N.A."/>
            <person name="Lu Y.-P."/>
            <person name="Flavell R.B."/>
            <person name="Feldmann K.A."/>
        </authorList>
    </citation>
    <scope>NUCLEOTIDE SEQUENCE [LARGE SCALE MRNA]</scope>
</reference>
<reference key="7">
    <citation type="journal article" date="2003" name="Mol. Cell. Proteomics">
        <title>Large-scale analysis of in vivo phosphorylated membrane proteins by immobilized metal ion affinity chromatography and mass spectrometry.</title>
        <authorList>
            <person name="Nuehse T.S."/>
            <person name="Stensballe A."/>
            <person name="Jensen O.N."/>
            <person name="Peck S.C."/>
        </authorList>
    </citation>
    <scope>PHOSPHORYLATION [LARGE SCALE ANALYSIS] AT SER-289 AND SER-291</scope>
    <scope>IDENTIFICATION BY MASS SPECTROMETRY [LARGE SCALE ANALYSIS]</scope>
    <source>
        <strain>cv. La-0</strain>
    </source>
</reference>
<reference key="8">
    <citation type="journal article" date="2004" name="Plant Cell">
        <title>Phosphoproteomics of the Arabidopsis plasma membrane and a new phosphorylation site database.</title>
        <authorList>
            <person name="Nuehse T.S."/>
            <person name="Stensballe A."/>
            <person name="Jensen O.N."/>
            <person name="Peck S.C."/>
        </authorList>
    </citation>
    <scope>PHOSPHORYLATION [LARGE SCALE ANALYSIS] AT SER-289 AND SER-291</scope>
    <scope>IDENTIFICATION BY MASS SPECTROMETRY [LARGE SCALE ANALYSIS]</scope>
</reference>
<reference key="9">
    <citation type="journal article" date="2004" name="Ann. Bot.">
        <title>A post-genomic approach to understanding sphingolipid metabolism in Arabidopsis thaliana.</title>
        <authorList>
            <person name="Dunn T.M."/>
            <person name="Lynch D.V."/>
            <person name="Michaelson L.V."/>
            <person name="Napier J.A."/>
        </authorList>
    </citation>
    <scope>REVIEW</scope>
</reference>
<reference key="10">
    <citation type="journal article" date="2008" name="Biochem. Biophys. Res. Commun.">
        <title>Arabidopsis AAL-toxin-resistant mutant atr1 shows enhanced tolerance to programmed cell death induced by reactive oxygen species.</title>
        <authorList>
            <person name="Gechev T.S."/>
            <person name="Ferwerda M.A."/>
            <person name="Mehterov N."/>
            <person name="Laloi C."/>
            <person name="Qureshi M.K."/>
            <person name="Hille J."/>
        </authorList>
    </citation>
    <scope>DISRUPTION PHENOTYPE</scope>
</reference>
<reference key="11">
    <citation type="journal article" date="2011" name="New Phytol.">
        <title>Disruption of the ceramide synthase LOH1 causes spontaneous cell death in Arabidopsis thaliana.</title>
        <authorList>
            <person name="Ternes P."/>
            <person name="Feussner K."/>
            <person name="Werner S."/>
            <person name="Lerche J."/>
            <person name="Iven T."/>
            <person name="Heilmann I."/>
            <person name="Riezman H."/>
            <person name="Feussner I."/>
        </authorList>
    </citation>
    <scope>FUNCTION</scope>
    <scope>DISRUPTION PHENOTYPE</scope>
    <scope>TISSUE SPECIFICITY</scope>
    <scope>CATALYTIC ACTIVITY</scope>
    <scope>PATHWAY</scope>
    <source>
        <strain>cv. Columbia</strain>
    </source>
</reference>
<reference key="12">
    <citation type="journal article" date="2011" name="Plant Cell">
        <title>Sphingolipids containing very-long-chain fatty acids define a secretory pathway for specific polar plasma membrane protein targeting in Arabidopsis.</title>
        <authorList>
            <person name="Markham J.E."/>
            <person name="Molino D."/>
            <person name="Gissot L."/>
            <person name="Bellec Y."/>
            <person name="Hematy K."/>
            <person name="Marion J."/>
            <person name="Belcram K."/>
            <person name="Palauqui J.-C."/>
            <person name="Satiat-Jeunemaitre B."/>
            <person name="Faure J.-D."/>
        </authorList>
    </citation>
    <scope>FUNCTION</scope>
    <scope>DISRUPTION PHENOTYPE</scope>
    <scope>CATALYTIC ACTIVITY</scope>
    <scope>PATHWAY</scope>
    <source>
        <strain>cv. Columbia</strain>
    </source>
</reference>
<reference key="13">
    <citation type="journal article" date="2013" name="Arabidopsis Book">
        <title>Acyl-lipid metabolism.</title>
        <authorList>
            <person name="Li-Beisson Y."/>
            <person name="Shorrosh B."/>
            <person name="Beisson F."/>
            <person name="Andersson M.X."/>
            <person name="Arondel V."/>
            <person name="Bates P.D."/>
            <person name="Baud S."/>
            <person name="Bird D."/>
            <person name="Debono A."/>
            <person name="Durrett T.P."/>
            <person name="Franke R.B."/>
            <person name="Graham I.A."/>
            <person name="Katayama K."/>
            <person name="Kelly A.A."/>
            <person name="Larson T."/>
            <person name="Markham J.E."/>
            <person name="Miquel M."/>
            <person name="Molina I."/>
            <person name="Nishida I."/>
            <person name="Rowland O."/>
            <person name="Samuels L."/>
            <person name="Schmid K.M."/>
            <person name="Wada H."/>
            <person name="Welti R."/>
            <person name="Xu C."/>
            <person name="Zallot R."/>
            <person name="Ohlrogge J."/>
        </authorList>
    </citation>
    <scope>REVIEW ON SPHINGOLIPIDS</scope>
</reference>
<reference key="14">
    <citation type="journal article" date="2013" name="Curr. Opin. Plant Biol.">
        <title>Plant sphingolipids: function follows form.</title>
        <authorList>
            <person name="Markham J.E."/>
            <person name="Lynch D.V."/>
            <person name="Napier J.A."/>
            <person name="Dunn T.M."/>
            <person name="Cahoon E.B."/>
        </authorList>
    </citation>
    <scope>REVIEW ON SPHINGOLIPIDS</scope>
</reference>
<reference key="15">
    <citation type="journal article" date="2013" name="Mol. Plant Microbe Interact.">
        <title>Ethylene-responsive AP2/ERF transcription factor MACD1 participates in phytotoxin-triggered programmed cell death.</title>
        <authorList>
            <person name="Mase K."/>
            <person name="Ishihama N."/>
            <person name="Mori H."/>
            <person name="Takahashi H."/>
            <person name="Kaminaka H."/>
            <person name="Kodama M."/>
            <person name="Yoshioka H."/>
        </authorList>
    </citation>
    <scope>DISRUPTION PHENOTYPE</scope>
    <source>
        <strain>cv. Columbia</strain>
    </source>
</reference>
<reference key="16">
    <citation type="journal article" date="2015" name="Phytochemistry">
        <title>Sphingolipid metabolism is strikingly different between pollen and leaf in Arabidopsis as revealed by compositional and gene expression profiling.</title>
        <authorList>
            <person name="Luttgeharm K.D."/>
            <person name="Kimberlin A.N."/>
            <person name="Cahoon R.E."/>
            <person name="Cerny R.L."/>
            <person name="Napier J.A."/>
            <person name="Markham J.E."/>
            <person name="Cahoon E.B."/>
        </authorList>
    </citation>
    <scope>TISSUE SPECIFICITY</scope>
    <source>
        <strain>cv. Columbia</strain>
    </source>
</reference>
<reference key="17">
    <citation type="journal article" date="2015" name="Plant Physiol.">
        <title>Overexpression of Arabidopsis ceramide synthases differentially affects growth, sphingolipid metabolism, programmed cell death, and mycotoxin resistance.</title>
        <authorList>
            <person name="Luttgeharm K.D."/>
            <person name="Chen M."/>
            <person name="Mehra A."/>
            <person name="Cahoon R.E."/>
            <person name="Markham J.E."/>
            <person name="Cahoon E.B."/>
        </authorList>
    </citation>
    <scope>FUNCTION</scope>
    <scope>ACTIVITY REGULATION</scope>
    <source>
        <strain>cv. Columbia</strain>
    </source>
</reference>
<reference key="18">
    <citation type="journal article" date="2015" name="PLoS Genet.">
        <title>Unsaturation of very-long-chain ceramides protects plant from hypoxia-induced damages by modulating ethylene signaling in Arabidopsis.</title>
        <authorList>
            <person name="Xie L.-J."/>
            <person name="Chen Q.-F."/>
            <person name="Chen M.-X."/>
            <person name="Yu L.-J."/>
            <person name="Huang L."/>
            <person name="Chen L."/>
            <person name="Wang F.-Z."/>
            <person name="Xia F.-N."/>
            <person name="Zhu T.-R."/>
            <person name="Wu J.-X."/>
            <person name="Yin J."/>
            <person name="Liao B."/>
            <person name="Shi J."/>
            <person name="Zhang J.-H."/>
            <person name="Aharoni A."/>
            <person name="Yao N."/>
            <person name="Shu W."/>
            <person name="Xiao S."/>
        </authorList>
    </citation>
    <scope>FUNCTION</scope>
    <scope>DISRUPTION PHENOTYPE</scope>
    <source>
        <strain>cv. Columbia</strain>
    </source>
</reference>
<reference key="19">
    <citation type="journal article" date="2016" name="Biochem. J.">
        <title>Substrate specificity, kinetic properties and inhibition by fumonisin B1 of ceramide synthase isoforms from Arabidopsis.</title>
        <authorList>
            <person name="Luttgeharm K.D."/>
            <person name="Cahoon E.B."/>
            <person name="Markham J.E."/>
        </authorList>
    </citation>
    <scope>FUNCTION</scope>
    <scope>CATALYTIC ACTIVITY</scope>
    <scope>ACTIVITY REGULATION</scope>
    <scope>BIOPHYSICOCHEMICAL PROPERTIES</scope>
    <scope>PATHWAY</scope>
</reference>
<reference key="20">
    <citation type="journal article" date="2020" name="Trends Plant Sci.">
        <title>Synthesis and function of complex sphingolipid glycosylation.</title>
        <authorList>
            <person name="Mortimer J.C."/>
            <person name="Scheller H.V."/>
        </authorList>
    </citation>
    <scope>REVIEW</scope>
</reference>
<gene>
    <name evidence="15 18" type="primary">LOH2</name>
    <name evidence="14" type="synonym">LAG1</name>
    <name evidence="22" type="synonym">LAG2</name>
    <name evidence="21" type="ordered locus">At3g19260</name>
    <name evidence="23" type="ORF">MVI11.18</name>
</gene>
<keyword id="KW-0256">Endoplasmic reticulum</keyword>
<keyword id="KW-0444">Lipid biosynthesis</keyword>
<keyword id="KW-0443">Lipid metabolism</keyword>
<keyword id="KW-0472">Membrane</keyword>
<keyword id="KW-0597">Phosphoprotein</keyword>
<keyword id="KW-1185">Reference proteome</keyword>
<keyword id="KW-0808">Transferase</keyword>
<keyword id="KW-0812">Transmembrane</keyword>
<keyword id="KW-1133">Transmembrane helix</keyword>